<proteinExistence type="evidence at protein level"/>
<protein>
    <recommendedName>
        <fullName evidence="16">2-oxoglutarate dehydrogenase complex component E1</fullName>
        <shortName>E1o</shortName>
        <shortName evidence="15">HsOGDH</shortName>
        <shortName>OGDC-E1</shortName>
        <shortName>OGDH-E1</shortName>
        <ecNumber evidence="6 7 8 9 11">1.2.4.2</ecNumber>
    </recommendedName>
    <alternativeName>
        <fullName>2-oxoglutarate dehydrogenase, mitochondrial</fullName>
    </alternativeName>
    <alternativeName>
        <fullName>Alpha-ketoglutarate dehydrogenase</fullName>
        <shortName>Alpha-KGDH-E1</shortName>
    </alternativeName>
    <alternativeName>
        <fullName>Thiamine diphosphate (ThDP)-dependent 2-oxoglutarate dehydrogenase</fullName>
    </alternativeName>
</protein>
<keyword id="KW-0002">3D-structure</keyword>
<keyword id="KW-0007">Acetylation</keyword>
<keyword id="KW-0025">Alternative splicing</keyword>
<keyword id="KW-0106">Calcium</keyword>
<keyword id="KW-0324">Glycolysis</keyword>
<keyword id="KW-1017">Isopeptide bond</keyword>
<keyword id="KW-0460">Magnesium</keyword>
<keyword id="KW-0479">Metal-binding</keyword>
<keyword id="KW-0496">Mitochondrion</keyword>
<keyword id="KW-0539">Nucleus</keyword>
<keyword id="KW-0560">Oxidoreductase</keyword>
<keyword id="KW-0597">Phosphoprotein</keyword>
<keyword id="KW-1267">Proteomics identification</keyword>
<keyword id="KW-1185">Reference proteome</keyword>
<keyword id="KW-0786">Thiamine pyrophosphate</keyword>
<keyword id="KW-0809">Transit peptide</keyword>
<keyword id="KW-0832">Ubl conjugation</keyword>
<evidence type="ECO:0000250" key="1">
    <source>
        <dbReference type="UniProtKB" id="Q148N0"/>
    </source>
</evidence>
<evidence type="ECO:0000250" key="2">
    <source>
        <dbReference type="UniProtKB" id="Q60597"/>
    </source>
</evidence>
<evidence type="ECO:0000250" key="3">
    <source>
        <dbReference type="UniProtKB" id="Q96HY7"/>
    </source>
</evidence>
<evidence type="ECO:0000255" key="4"/>
<evidence type="ECO:0000269" key="5">
    <source>
    </source>
</evidence>
<evidence type="ECO:0000269" key="6">
    <source>
    </source>
</evidence>
<evidence type="ECO:0000269" key="7">
    <source>
    </source>
</evidence>
<evidence type="ECO:0000269" key="8">
    <source>
    </source>
</evidence>
<evidence type="ECO:0000269" key="9">
    <source>
    </source>
</evidence>
<evidence type="ECO:0000269" key="10">
    <source>
    </source>
</evidence>
<evidence type="ECO:0000269" key="11">
    <source>
    </source>
</evidence>
<evidence type="ECO:0000303" key="12">
    <source>
    </source>
</evidence>
<evidence type="ECO:0000303" key="13">
    <source>
    </source>
</evidence>
<evidence type="ECO:0000303" key="14">
    <source>
    </source>
</evidence>
<evidence type="ECO:0000303" key="15">
    <source>
    </source>
</evidence>
<evidence type="ECO:0000305" key="16"/>
<evidence type="ECO:0000305" key="17">
    <source>
    </source>
</evidence>
<evidence type="ECO:0000305" key="18">
    <source>
    </source>
</evidence>
<evidence type="ECO:0000305" key="19">
    <source>
    </source>
</evidence>
<evidence type="ECO:0000305" key="20">
    <source>
    </source>
</evidence>
<evidence type="ECO:0000305" key="21">
    <source>
    </source>
</evidence>
<evidence type="ECO:0000312" key="22">
    <source>
        <dbReference type="HGNC" id="HGNC:8124"/>
    </source>
</evidence>
<evidence type="ECO:0007744" key="23">
    <source>
        <dbReference type="PDB" id="7WGR"/>
    </source>
</evidence>
<evidence type="ECO:0007744" key="24">
    <source>
    </source>
</evidence>
<evidence type="ECO:0007829" key="25">
    <source>
        <dbReference type="PDB" id="7WGR"/>
    </source>
</evidence>
<name>ODO1_HUMAN</name>
<feature type="transit peptide" description="Mitochondrion" evidence="4">
    <location>
        <begin position="1"/>
        <end position="40"/>
    </location>
</feature>
<feature type="chain" id="PRO_0000020432" description="2-oxoglutarate dehydrogenase complex component E1">
    <location>
        <begin position="41"/>
        <end position="1023"/>
    </location>
</feature>
<feature type="binding site" evidence="11 23">
    <location>
        <position position="143"/>
    </location>
    <ligand>
        <name>Ca(2+)</name>
        <dbReference type="ChEBI" id="CHEBI:29108"/>
    </ligand>
</feature>
<feature type="binding site" evidence="11 23">
    <location>
        <position position="156"/>
    </location>
    <ligand>
        <name>Ca(2+)</name>
        <dbReference type="ChEBI" id="CHEBI:29108"/>
    </ligand>
</feature>
<feature type="binding site" evidence="11 23">
    <location>
        <position position="158"/>
    </location>
    <ligand>
        <name>Ca(2+)</name>
        <dbReference type="ChEBI" id="CHEBI:29108"/>
    </ligand>
</feature>
<feature type="binding site" evidence="11 23">
    <location>
        <position position="312"/>
    </location>
    <ligand>
        <name>thiamine diphosphate</name>
        <dbReference type="ChEBI" id="CHEBI:58937"/>
    </ligand>
</feature>
<feature type="binding site" evidence="11 23">
    <location>
        <position position="411"/>
    </location>
    <ligand>
        <name>Mg(2+)</name>
        <dbReference type="ChEBI" id="CHEBI:18420"/>
    </ligand>
</feature>
<feature type="binding site" evidence="11 23">
    <location>
        <position position="411"/>
    </location>
    <ligand>
        <name>thiamine diphosphate</name>
        <dbReference type="ChEBI" id="CHEBI:58937"/>
    </ligand>
</feature>
<feature type="binding site" evidence="11 23">
    <location>
        <position position="444"/>
    </location>
    <ligand>
        <name>Mg(2+)</name>
        <dbReference type="ChEBI" id="CHEBI:18420"/>
    </ligand>
</feature>
<feature type="binding site" evidence="11 23">
    <location>
        <position position="444"/>
    </location>
    <ligand>
        <name>thiamine diphosphate</name>
        <dbReference type="ChEBI" id="CHEBI:58937"/>
    </ligand>
</feature>
<feature type="binding site" evidence="11 23">
    <location>
        <position position="446"/>
    </location>
    <ligand>
        <name>Mg(2+)</name>
        <dbReference type="ChEBI" id="CHEBI:18420"/>
    </ligand>
</feature>
<feature type="binding site" evidence="11 23">
    <location>
        <position position="446"/>
    </location>
    <ligand>
        <name>thiamine diphosphate</name>
        <dbReference type="ChEBI" id="CHEBI:58937"/>
    </ligand>
</feature>
<feature type="binding site" evidence="11 23">
    <location>
        <position position="676"/>
    </location>
    <ligand>
        <name>thiamine diphosphate</name>
        <dbReference type="ChEBI" id="CHEBI:58937"/>
    </ligand>
</feature>
<feature type="modified residue" description="N6-succinyllysine" evidence="2">
    <location>
        <position position="74"/>
    </location>
</feature>
<feature type="modified residue" description="Phosphoserine" evidence="2">
    <location>
        <position position="100"/>
    </location>
</feature>
<feature type="modified residue" description="N6-acetyllysine" evidence="2">
    <location>
        <position position="401"/>
    </location>
</feature>
<feature type="modified residue" description="N6-succinyllysine" evidence="2">
    <location>
        <position position="564"/>
    </location>
</feature>
<feature type="modified residue" description="N6-acetyllysine" evidence="24">
    <location>
        <position position="970"/>
    </location>
</feature>
<feature type="cross-link" description="Glycyl lysine isopeptide (Lys-Gly) (interchain with G-Cter in ubiquitin)" evidence="5">
    <location>
        <position position="534"/>
    </location>
</feature>
<feature type="splice variant" id="VSP_042313" description="In isoform 2." evidence="12">
    <original>IRGHHVAQLDPLGILDADLDSSVPADIISSTDKL</original>
    <variation>VRGHHIAKLDPLGISCVNFDDAPVTVSSNV</variation>
    <location>
        <begin position="139"/>
        <end position="172"/>
    </location>
</feature>
<feature type="splice variant" id="VSP_043628" description="In isoform 3." evidence="13">
    <original>MSILLHGDAAFAGQGIVYETFHLS</original>
    <variation>RPRERRARQIVKAPCSSMEFRSPT</variation>
    <location>
        <begin position="404"/>
        <end position="427"/>
    </location>
</feature>
<feature type="splice variant" id="VSP_043629" description="In isoform 3." evidence="13">
    <location>
        <begin position="428"/>
        <end position="1023"/>
    </location>
</feature>
<feature type="sequence variant" id="VAR_050435" description="In dbSNP:rs2070607.">
    <original>V</original>
    <variation>I</variation>
    <location>
        <position position="1018"/>
    </location>
</feature>
<feature type="mutagenesis site" description="Six-fold decrease in sensitivity for calcium." evidence="6">
    <original>D</original>
    <variation>A</variation>
    <location>
        <position position="154"/>
    </location>
</feature>
<feature type="mutagenesis site" description="Abolished enzyme activity and ability to promote histone succinylation." evidence="9">
    <original>PY</original>
    <variation>AA</variation>
    <location>
        <begin position="459"/>
        <end position="460"/>
    </location>
</feature>
<feature type="sequence conflict" description="In Ref. 1; BAA01393 and 2; BAA06836." evidence="16" ref="1 2">
    <original>LGFA</original>
    <variation>AGLR</variation>
    <location>
        <begin position="730"/>
        <end position="733"/>
    </location>
</feature>
<feature type="sequence conflict" description="In Ref. 3; BAG65261." evidence="16" ref="3">
    <original>Q</original>
    <variation>L</variation>
    <location>
        <position position="755"/>
    </location>
</feature>
<feature type="sequence conflict" description="In Ref. 2; BAA06836." evidence="16" ref="2">
    <original>N</original>
    <variation>D</variation>
    <location>
        <position position="831"/>
    </location>
</feature>
<feature type="sequence conflict" description="In Ref. 1; BAA01393 and 2; BAA06836." evidence="16" ref="1 2">
    <original>D</original>
    <variation>N</variation>
    <location>
        <position position="989"/>
    </location>
</feature>
<feature type="helix" evidence="25">
    <location>
        <begin position="130"/>
        <end position="144"/>
    </location>
</feature>
<feature type="strand" evidence="25">
    <location>
        <begin position="149"/>
        <end position="153"/>
    </location>
</feature>
<feature type="strand" evidence="25">
    <location>
        <begin position="155"/>
        <end position="157"/>
    </location>
</feature>
<feature type="helix" evidence="25">
    <location>
        <begin position="169"/>
        <end position="174"/>
    </location>
</feature>
<feature type="helix" evidence="25">
    <location>
        <begin position="179"/>
        <end position="181"/>
    </location>
</feature>
<feature type="strand" evidence="25">
    <location>
        <begin position="182"/>
        <end position="187"/>
    </location>
</feature>
<feature type="strand" evidence="25">
    <location>
        <begin position="199"/>
        <end position="202"/>
    </location>
</feature>
<feature type="helix" evidence="25">
    <location>
        <begin position="203"/>
        <end position="214"/>
    </location>
</feature>
<feature type="strand" evidence="25">
    <location>
        <begin position="215"/>
        <end position="221"/>
    </location>
</feature>
<feature type="helix" evidence="25">
    <location>
        <begin position="228"/>
        <end position="239"/>
    </location>
</feature>
<feature type="strand" evidence="25">
    <location>
        <begin position="240"/>
        <end position="242"/>
    </location>
</feature>
<feature type="helix" evidence="25">
    <location>
        <begin position="248"/>
        <end position="271"/>
    </location>
</feature>
<feature type="helix" evidence="25">
    <location>
        <begin position="286"/>
        <end position="300"/>
    </location>
</feature>
<feature type="strand" evidence="25">
    <location>
        <begin position="304"/>
        <end position="308"/>
    </location>
</feature>
<feature type="helix" evidence="25">
    <location>
        <begin position="314"/>
        <end position="320"/>
    </location>
</feature>
<feature type="helix" evidence="25">
    <location>
        <begin position="326"/>
        <end position="334"/>
    </location>
</feature>
<feature type="strand" evidence="25">
    <location>
        <begin position="343"/>
        <end position="345"/>
    </location>
</feature>
<feature type="strand" evidence="25">
    <location>
        <begin position="367"/>
        <end position="370"/>
    </location>
</feature>
<feature type="turn" evidence="25">
    <location>
        <begin position="377"/>
        <end position="380"/>
    </location>
</feature>
<feature type="helix" evidence="25">
    <location>
        <begin position="381"/>
        <end position="395"/>
    </location>
</feature>
<feature type="strand" evidence="25">
    <location>
        <begin position="401"/>
        <end position="410"/>
    </location>
</feature>
<feature type="turn" evidence="25">
    <location>
        <begin position="411"/>
        <end position="416"/>
    </location>
</feature>
<feature type="helix" evidence="25">
    <location>
        <begin position="419"/>
        <end position="428"/>
    </location>
</feature>
<feature type="helix" evidence="25">
    <location>
        <begin position="430"/>
        <end position="432"/>
    </location>
</feature>
<feature type="strand" evidence="25">
    <location>
        <begin position="438"/>
        <end position="443"/>
    </location>
</feature>
<feature type="helix" evidence="25">
    <location>
        <begin position="452"/>
        <end position="454"/>
    </location>
</feature>
<feature type="strand" evidence="25">
    <location>
        <begin position="457"/>
        <end position="460"/>
    </location>
</feature>
<feature type="helix" evidence="25">
    <location>
        <begin position="463"/>
        <end position="465"/>
    </location>
</feature>
<feature type="turn" evidence="25">
    <location>
        <begin position="466"/>
        <end position="469"/>
    </location>
</feature>
<feature type="strand" evidence="25">
    <location>
        <begin position="472"/>
        <end position="476"/>
    </location>
</feature>
<feature type="helix" evidence="25">
    <location>
        <begin position="480"/>
        <end position="497"/>
    </location>
</feature>
<feature type="strand" evidence="25">
    <location>
        <begin position="501"/>
        <end position="506"/>
    </location>
</feature>
<feature type="turn" evidence="25">
    <location>
        <begin position="520"/>
        <end position="522"/>
    </location>
</feature>
<feature type="helix" evidence="25">
    <location>
        <begin position="524"/>
        <end position="530"/>
    </location>
</feature>
<feature type="helix" evidence="25">
    <location>
        <begin position="536"/>
        <end position="547"/>
    </location>
</feature>
<feature type="helix" evidence="25">
    <location>
        <begin position="552"/>
        <end position="573"/>
    </location>
</feature>
<feature type="helix" evidence="25">
    <location>
        <begin position="611"/>
        <end position="621"/>
    </location>
</feature>
<feature type="helix" evidence="25">
    <location>
        <begin position="633"/>
        <end position="647"/>
    </location>
</feature>
<feature type="helix" evidence="25">
    <location>
        <begin position="653"/>
        <end position="666"/>
    </location>
</feature>
<feature type="strand" evidence="25">
    <location>
        <begin position="670"/>
        <end position="675"/>
    </location>
</feature>
<feature type="turn" evidence="25">
    <location>
        <begin position="676"/>
        <end position="680"/>
    </location>
</feature>
<feature type="strand" evidence="25">
    <location>
        <begin position="689"/>
        <end position="691"/>
    </location>
</feature>
<feature type="strand" evidence="25">
    <location>
        <begin position="693"/>
        <end position="695"/>
    </location>
</feature>
<feature type="helix" evidence="25">
    <location>
        <begin position="702"/>
        <end position="705"/>
    </location>
</feature>
<feature type="strand" evidence="25">
    <location>
        <begin position="706"/>
        <end position="709"/>
    </location>
</feature>
<feature type="strand" evidence="25">
    <location>
        <begin position="713"/>
        <end position="717"/>
    </location>
</feature>
<feature type="helix" evidence="25">
    <location>
        <begin position="724"/>
        <end position="732"/>
    </location>
</feature>
<feature type="strand" evidence="25">
    <location>
        <begin position="737"/>
        <end position="744"/>
    </location>
</feature>
<feature type="helix" evidence="25">
    <location>
        <begin position="750"/>
        <end position="754"/>
    </location>
</feature>
<feature type="helix" evidence="25">
    <location>
        <begin position="755"/>
        <end position="760"/>
    </location>
</feature>
<feature type="turn" evidence="25">
    <location>
        <begin position="761"/>
        <end position="768"/>
    </location>
</feature>
<feature type="strand" evidence="25">
    <location>
        <begin position="776"/>
        <end position="780"/>
    </location>
</feature>
<feature type="strand" evidence="25">
    <location>
        <begin position="784"/>
        <end position="786"/>
    </location>
</feature>
<feature type="strand" evidence="25">
    <location>
        <begin position="788"/>
        <end position="791"/>
    </location>
</feature>
<feature type="helix" evidence="25">
    <location>
        <begin position="795"/>
        <end position="799"/>
    </location>
</feature>
<feature type="helix" evidence="25">
    <location>
        <begin position="819"/>
        <end position="824"/>
    </location>
</feature>
<feature type="strand" evidence="25">
    <location>
        <begin position="828"/>
        <end position="830"/>
    </location>
</feature>
<feature type="helix" evidence="25">
    <location>
        <begin position="835"/>
        <end position="847"/>
    </location>
</feature>
<feature type="strand" evidence="25">
    <location>
        <begin position="848"/>
        <end position="850"/>
    </location>
</feature>
<feature type="strand" evidence="25">
    <location>
        <begin position="854"/>
        <end position="858"/>
    </location>
</feature>
<feature type="strand" evidence="25">
    <location>
        <begin position="860"/>
        <end position="864"/>
    </location>
</feature>
<feature type="helix" evidence="25">
    <location>
        <begin position="872"/>
        <end position="874"/>
    </location>
</feature>
<feature type="helix" evidence="25">
    <location>
        <begin position="890"/>
        <end position="893"/>
    </location>
</feature>
<feature type="helix" evidence="25">
    <location>
        <begin position="895"/>
        <end position="897"/>
    </location>
</feature>
<feature type="strand" evidence="25">
    <location>
        <begin position="899"/>
        <end position="904"/>
    </location>
</feature>
<feature type="helix" evidence="25">
    <location>
        <begin position="908"/>
        <end position="918"/>
    </location>
</feature>
<feature type="strand" evidence="25">
    <location>
        <begin position="925"/>
        <end position="929"/>
    </location>
</feature>
<feature type="strand" evidence="25">
    <location>
        <begin position="931"/>
        <end position="935"/>
    </location>
</feature>
<feature type="helix" evidence="25">
    <location>
        <begin position="940"/>
        <end position="947"/>
    </location>
</feature>
<feature type="strand" evidence="25">
    <location>
        <begin position="954"/>
        <end position="960"/>
    </location>
</feature>
<feature type="helix" evidence="25">
    <location>
        <begin position="966"/>
        <end position="976"/>
    </location>
</feature>
<feature type="strand" evidence="25">
    <location>
        <begin position="984"/>
        <end position="988"/>
    </location>
</feature>
<feature type="strand" evidence="25">
    <location>
        <begin position="992"/>
        <end position="995"/>
    </location>
</feature>
<feature type="helix" evidence="25">
    <location>
        <begin position="999"/>
        <end position="1014"/>
    </location>
</feature>
<feature type="helix" evidence="25">
    <location>
        <begin position="1020"/>
        <end position="1022"/>
    </location>
</feature>
<dbReference type="EC" id="1.2.4.2" evidence="6 7 8 9 11"/>
<dbReference type="EMBL" id="D10523">
    <property type="protein sequence ID" value="BAA01393.1"/>
    <property type="status" value="ALT_FRAME"/>
    <property type="molecule type" value="mRNA"/>
</dbReference>
<dbReference type="EMBL" id="D32064">
    <property type="protein sequence ID" value="BAA06836.1"/>
    <property type="status" value="ALT_FRAME"/>
    <property type="molecule type" value="Genomic_DNA"/>
</dbReference>
<dbReference type="EMBL" id="AK304439">
    <property type="protein sequence ID" value="BAG65261.1"/>
    <property type="molecule type" value="mRNA"/>
</dbReference>
<dbReference type="EMBL" id="AC004859">
    <property type="protein sequence ID" value="AAQ96884.1"/>
    <property type="molecule type" value="Genomic_DNA"/>
</dbReference>
<dbReference type="EMBL" id="AC004859">
    <property type="protein sequence ID" value="AAQ96885.1"/>
    <property type="molecule type" value="Genomic_DNA"/>
</dbReference>
<dbReference type="EMBL" id="AC011894">
    <property type="status" value="NOT_ANNOTATED_CDS"/>
    <property type="molecule type" value="Genomic_DNA"/>
</dbReference>
<dbReference type="EMBL" id="CH471128">
    <property type="protein sequence ID" value="EAW61086.1"/>
    <property type="molecule type" value="Genomic_DNA"/>
</dbReference>
<dbReference type="EMBL" id="CH471128">
    <property type="protein sequence ID" value="EAW61087.1"/>
    <property type="molecule type" value="Genomic_DNA"/>
</dbReference>
<dbReference type="EMBL" id="CH471128">
    <property type="protein sequence ID" value="EAW61089.1"/>
    <property type="molecule type" value="Genomic_DNA"/>
</dbReference>
<dbReference type="EMBL" id="BC004964">
    <property type="protein sequence ID" value="AAH04964.1"/>
    <property type="molecule type" value="mRNA"/>
</dbReference>
<dbReference type="EMBL" id="BC009580">
    <property type="protein sequence ID" value="AAH09580.1"/>
    <property type="molecule type" value="mRNA"/>
</dbReference>
<dbReference type="EMBL" id="BC014617">
    <property type="protein sequence ID" value="AAH14617.1"/>
    <property type="molecule type" value="mRNA"/>
</dbReference>
<dbReference type="CCDS" id="CCDS34627.1">
    <molecule id="Q02218-1"/>
</dbReference>
<dbReference type="CCDS" id="CCDS47580.1">
    <molecule id="Q02218-3"/>
</dbReference>
<dbReference type="CCDS" id="CCDS55107.1">
    <molecule id="Q02218-2"/>
</dbReference>
<dbReference type="PIR" id="A38234">
    <property type="entry name" value="A38234"/>
</dbReference>
<dbReference type="RefSeq" id="NP_001003941.1">
    <molecule id="Q02218-3"/>
    <property type="nucleotide sequence ID" value="NM_001003941.3"/>
</dbReference>
<dbReference type="RefSeq" id="NP_001158508.1">
    <molecule id="Q02218-2"/>
    <property type="nucleotide sequence ID" value="NM_001165036.2"/>
</dbReference>
<dbReference type="RefSeq" id="NP_002532.2">
    <molecule id="Q02218-1"/>
    <property type="nucleotide sequence ID" value="NM_002541.4"/>
</dbReference>
<dbReference type="RefSeq" id="XP_047276383.1">
    <molecule id="Q02218-1"/>
    <property type="nucleotide sequence ID" value="XM_047420427.1"/>
</dbReference>
<dbReference type="RefSeq" id="XP_047276384.1">
    <molecule id="Q02218-2"/>
    <property type="nucleotide sequence ID" value="XM_047420428.1"/>
</dbReference>
<dbReference type="PDB" id="3ERY">
    <property type="method" value="X-ray"/>
    <property type="resolution" value="1.95 A"/>
    <property type="chains" value="P/Q=932-940"/>
</dbReference>
<dbReference type="PDB" id="7WGR">
    <property type="method" value="EM"/>
    <property type="resolution" value="2.92 A"/>
    <property type="chains" value="A/B=129-1023"/>
</dbReference>
<dbReference type="PDB" id="8I0K">
    <property type="method" value="EM"/>
    <property type="resolution" value="2.86 A"/>
    <property type="chains" value="A/B=113-1023"/>
</dbReference>
<dbReference type="PDBsum" id="3ERY"/>
<dbReference type="PDBsum" id="7WGR"/>
<dbReference type="PDBsum" id="8I0K"/>
<dbReference type="EMDB" id="EMD-32485"/>
<dbReference type="EMDB" id="EMD-35042"/>
<dbReference type="SMR" id="Q02218"/>
<dbReference type="BioGRID" id="111017">
    <property type="interactions" value="245"/>
</dbReference>
<dbReference type="ComplexPortal" id="CPX-9061">
    <property type="entry name" value="Mitochondrial 2-oxoglutarate dehydrogenase complex"/>
</dbReference>
<dbReference type="CORUM" id="Q02218"/>
<dbReference type="DIP" id="DIP-39353N"/>
<dbReference type="FunCoup" id="Q02218">
    <property type="interactions" value="2058"/>
</dbReference>
<dbReference type="IntAct" id="Q02218">
    <property type="interactions" value="54"/>
</dbReference>
<dbReference type="MINT" id="Q02218"/>
<dbReference type="STRING" id="9606.ENSP00000388183"/>
<dbReference type="ChEMBL" id="CHEMBL2816"/>
<dbReference type="DrugBank" id="DB12109">
    <property type="generic name" value="Devimistat"/>
</dbReference>
<dbReference type="DrugBank" id="DB00157">
    <property type="generic name" value="NADH"/>
</dbReference>
<dbReference type="DrugBank" id="DB00313">
    <property type="generic name" value="Valproic acid"/>
</dbReference>
<dbReference type="DrugBank" id="DB09092">
    <property type="generic name" value="Xanthinol"/>
</dbReference>
<dbReference type="CarbonylDB" id="Q02218"/>
<dbReference type="GlyGen" id="Q02218">
    <property type="glycosylation" value="1 site, 1 O-linked glycan (1 site)"/>
</dbReference>
<dbReference type="iPTMnet" id="Q02218"/>
<dbReference type="MetOSite" id="Q02218"/>
<dbReference type="PhosphoSitePlus" id="Q02218"/>
<dbReference type="SwissPalm" id="Q02218"/>
<dbReference type="BioMuta" id="OGDH"/>
<dbReference type="DMDM" id="160332299"/>
<dbReference type="REPRODUCTION-2DPAGE" id="IPI00098902"/>
<dbReference type="CPTAC" id="CPTAC-554"/>
<dbReference type="CPTAC" id="CPTAC-555"/>
<dbReference type="jPOST" id="Q02218"/>
<dbReference type="MassIVE" id="Q02218"/>
<dbReference type="PaxDb" id="9606-ENSP00000222673"/>
<dbReference type="PeptideAtlas" id="Q02218"/>
<dbReference type="ProteomicsDB" id="58058">
    <molecule id="Q02218-1"/>
</dbReference>
<dbReference type="ProteomicsDB" id="58059">
    <molecule id="Q02218-2"/>
</dbReference>
<dbReference type="ProteomicsDB" id="58060">
    <molecule id="Q02218-3"/>
</dbReference>
<dbReference type="Pumba" id="Q02218"/>
<dbReference type="Antibodypedia" id="13451">
    <property type="antibodies" value="235 antibodies from 28 providers"/>
</dbReference>
<dbReference type="DNASU" id="4967"/>
<dbReference type="Ensembl" id="ENST00000222673.6">
    <molecule id="Q02218-1"/>
    <property type="protein sequence ID" value="ENSP00000222673.5"/>
    <property type="gene ID" value="ENSG00000105953.16"/>
</dbReference>
<dbReference type="Ensembl" id="ENST00000443864.6">
    <molecule id="Q02218-3"/>
    <property type="protein sequence ID" value="ENSP00000388084.2"/>
    <property type="gene ID" value="ENSG00000105953.16"/>
</dbReference>
<dbReference type="Ensembl" id="ENST00000449767.5">
    <molecule id="Q02218-2"/>
    <property type="protein sequence ID" value="ENSP00000392878.1"/>
    <property type="gene ID" value="ENSG00000105953.16"/>
</dbReference>
<dbReference type="GeneID" id="4967"/>
<dbReference type="KEGG" id="hsa:4967"/>
<dbReference type="MANE-Select" id="ENST00000222673.6">
    <property type="protein sequence ID" value="ENSP00000222673.5"/>
    <property type="RefSeq nucleotide sequence ID" value="NM_002541.4"/>
    <property type="RefSeq protein sequence ID" value="NP_002532.2"/>
</dbReference>
<dbReference type="UCSC" id="uc003tlm.4">
    <molecule id="Q02218-1"/>
    <property type="organism name" value="human"/>
</dbReference>
<dbReference type="AGR" id="HGNC:8124"/>
<dbReference type="CTD" id="4967"/>
<dbReference type="DisGeNET" id="4967"/>
<dbReference type="GeneCards" id="OGDH"/>
<dbReference type="HGNC" id="HGNC:8124">
    <property type="gene designation" value="OGDH"/>
</dbReference>
<dbReference type="HPA" id="ENSG00000105953">
    <property type="expression patterns" value="Tissue enhanced (heart muscle, skeletal muscle, tongue)"/>
</dbReference>
<dbReference type="MalaCards" id="OGDH"/>
<dbReference type="MIM" id="613022">
    <property type="type" value="gene"/>
</dbReference>
<dbReference type="neXtProt" id="NX_Q02218"/>
<dbReference type="OpenTargets" id="ENSG00000105953"/>
<dbReference type="Orphanet" id="31">
    <property type="disease" value="Oxoglutaric aciduria"/>
</dbReference>
<dbReference type="PharmGKB" id="PA31910"/>
<dbReference type="VEuPathDB" id="HostDB:ENSG00000105953"/>
<dbReference type="eggNOG" id="KOG0450">
    <property type="taxonomic scope" value="Eukaryota"/>
</dbReference>
<dbReference type="GeneTree" id="ENSGT00950000183125"/>
<dbReference type="HOGENOM" id="CLU_004709_2_3_1"/>
<dbReference type="InParanoid" id="Q02218"/>
<dbReference type="OMA" id="RDSYCRT"/>
<dbReference type="OrthoDB" id="413077at2759"/>
<dbReference type="PAN-GO" id="Q02218">
    <property type="GO annotations" value="4 GO annotations based on evolutionary models"/>
</dbReference>
<dbReference type="PhylomeDB" id="Q02218"/>
<dbReference type="TreeFam" id="TF300695"/>
<dbReference type="BioCyc" id="MetaCyc:HS02832-MONOMER"/>
<dbReference type="BRENDA" id="1.2.1.105">
    <property type="organism ID" value="2681"/>
</dbReference>
<dbReference type="PathwayCommons" id="Q02218"/>
<dbReference type="Reactome" id="R-HSA-6783984">
    <property type="pathway name" value="Glycine degradation"/>
</dbReference>
<dbReference type="Reactome" id="R-HSA-9837999">
    <property type="pathway name" value="Mitochondrial protein degradation"/>
</dbReference>
<dbReference type="Reactome" id="R-HSA-9853506">
    <property type="pathway name" value="OGDH complex synthesizes succinyl-CoA from 2-OG"/>
</dbReference>
<dbReference type="SABIO-RK" id="Q02218"/>
<dbReference type="SignaLink" id="Q02218"/>
<dbReference type="SIGNOR" id="Q02218"/>
<dbReference type="BioGRID-ORCS" id="4967">
    <property type="hits" value="389 hits in 1161 CRISPR screens"/>
</dbReference>
<dbReference type="CD-CODE" id="91857CE7">
    <property type="entry name" value="Nucleolus"/>
</dbReference>
<dbReference type="CD-CODE" id="FB4E32DD">
    <property type="entry name" value="Presynaptic clusters and postsynaptic densities"/>
</dbReference>
<dbReference type="ChiTaRS" id="OGDH">
    <property type="organism name" value="human"/>
</dbReference>
<dbReference type="EvolutionaryTrace" id="Q02218"/>
<dbReference type="GeneWiki" id="OGDH"/>
<dbReference type="GenomeRNAi" id="4967"/>
<dbReference type="Pharos" id="Q02218">
    <property type="development level" value="Tbio"/>
</dbReference>
<dbReference type="PRO" id="PR:Q02218"/>
<dbReference type="Proteomes" id="UP000005640">
    <property type="component" value="Chromosome 7"/>
</dbReference>
<dbReference type="RNAct" id="Q02218">
    <property type="molecule type" value="protein"/>
</dbReference>
<dbReference type="Bgee" id="ENSG00000105953">
    <property type="expression patterns" value="Expressed in apex of heart and 186 other cell types or tissues"/>
</dbReference>
<dbReference type="ExpressionAtlas" id="Q02218">
    <property type="expression patterns" value="baseline and differential"/>
</dbReference>
<dbReference type="GO" id="GO:0005759">
    <property type="term" value="C:mitochondrial matrix"/>
    <property type="evidence" value="ECO:0000304"/>
    <property type="project" value="Reactome"/>
</dbReference>
<dbReference type="GO" id="GO:0031966">
    <property type="term" value="C:mitochondrial membrane"/>
    <property type="evidence" value="ECO:0000250"/>
    <property type="project" value="UniProtKB"/>
</dbReference>
<dbReference type="GO" id="GO:0005739">
    <property type="term" value="C:mitochondrion"/>
    <property type="evidence" value="ECO:0000314"/>
    <property type="project" value="HPA"/>
</dbReference>
<dbReference type="GO" id="GO:0005634">
    <property type="term" value="C:nucleus"/>
    <property type="evidence" value="ECO:0000314"/>
    <property type="project" value="UniProtKB"/>
</dbReference>
<dbReference type="GO" id="GO:0045252">
    <property type="term" value="C:oxoglutarate dehydrogenase complex"/>
    <property type="evidence" value="ECO:0000314"/>
    <property type="project" value="UniProtKB"/>
</dbReference>
<dbReference type="GO" id="GO:0031072">
    <property type="term" value="F:heat shock protein binding"/>
    <property type="evidence" value="ECO:0007669"/>
    <property type="project" value="Ensembl"/>
</dbReference>
<dbReference type="GO" id="GO:0046872">
    <property type="term" value="F:metal ion binding"/>
    <property type="evidence" value="ECO:0007669"/>
    <property type="project" value="UniProtKB-KW"/>
</dbReference>
<dbReference type="GO" id="GO:0034602">
    <property type="term" value="F:oxoglutarate dehydrogenase (NAD+) activity"/>
    <property type="evidence" value="ECO:0007669"/>
    <property type="project" value="Ensembl"/>
</dbReference>
<dbReference type="GO" id="GO:0004591">
    <property type="term" value="F:oxoglutarate dehydrogenase (succinyl-transferring) activity"/>
    <property type="evidence" value="ECO:0000314"/>
    <property type="project" value="UniProtKB"/>
</dbReference>
<dbReference type="GO" id="GO:0051087">
    <property type="term" value="F:protein-folding chaperone binding"/>
    <property type="evidence" value="ECO:0007669"/>
    <property type="project" value="Ensembl"/>
</dbReference>
<dbReference type="GO" id="GO:0030976">
    <property type="term" value="F:thiamine pyrophosphate binding"/>
    <property type="evidence" value="ECO:0000314"/>
    <property type="project" value="UniProtKB"/>
</dbReference>
<dbReference type="GO" id="GO:0006103">
    <property type="term" value="P:2-oxoglutarate metabolic process"/>
    <property type="evidence" value="ECO:0000314"/>
    <property type="project" value="UniProtKB"/>
</dbReference>
<dbReference type="GO" id="GO:0021695">
    <property type="term" value="P:cerebellar cortex development"/>
    <property type="evidence" value="ECO:0007669"/>
    <property type="project" value="Ensembl"/>
</dbReference>
<dbReference type="GO" id="GO:0006091">
    <property type="term" value="P:generation of precursor metabolites and energy"/>
    <property type="evidence" value="ECO:0000250"/>
    <property type="project" value="UniProtKB"/>
</dbReference>
<dbReference type="GO" id="GO:0006096">
    <property type="term" value="P:glycolytic process"/>
    <property type="evidence" value="ECO:0007669"/>
    <property type="project" value="UniProtKB-KW"/>
</dbReference>
<dbReference type="GO" id="GO:0021766">
    <property type="term" value="P:hippocampus development"/>
    <property type="evidence" value="ECO:0007669"/>
    <property type="project" value="Ensembl"/>
</dbReference>
<dbReference type="GO" id="GO:0006734">
    <property type="term" value="P:NADH metabolic process"/>
    <property type="evidence" value="ECO:0007669"/>
    <property type="project" value="Ensembl"/>
</dbReference>
<dbReference type="GO" id="GO:0061034">
    <property type="term" value="P:olfactory bulb mitral cell layer development"/>
    <property type="evidence" value="ECO:0007669"/>
    <property type="project" value="Ensembl"/>
</dbReference>
<dbReference type="GO" id="GO:0021860">
    <property type="term" value="P:pyramidal neuron development"/>
    <property type="evidence" value="ECO:0007669"/>
    <property type="project" value="Ensembl"/>
</dbReference>
<dbReference type="GO" id="GO:0021756">
    <property type="term" value="P:striatum development"/>
    <property type="evidence" value="ECO:0007669"/>
    <property type="project" value="Ensembl"/>
</dbReference>
<dbReference type="GO" id="GO:0006104">
    <property type="term" value="P:succinyl-CoA metabolic process"/>
    <property type="evidence" value="ECO:0000314"/>
    <property type="project" value="UniProtKB"/>
</dbReference>
<dbReference type="GO" id="GO:0022028">
    <property type="term" value="P:tangential migration from the subventricular zone to the olfactory bulb"/>
    <property type="evidence" value="ECO:0007669"/>
    <property type="project" value="Ensembl"/>
</dbReference>
<dbReference type="GO" id="GO:0021794">
    <property type="term" value="P:thalamus development"/>
    <property type="evidence" value="ECO:0007669"/>
    <property type="project" value="Ensembl"/>
</dbReference>
<dbReference type="GO" id="GO:0006099">
    <property type="term" value="P:tricarboxylic acid cycle"/>
    <property type="evidence" value="ECO:0000318"/>
    <property type="project" value="GO_Central"/>
</dbReference>
<dbReference type="CDD" id="cd02016">
    <property type="entry name" value="TPP_E1_OGDC_like"/>
    <property type="match status" value="1"/>
</dbReference>
<dbReference type="FunFam" id="3.40.50.12470:FF:000007">
    <property type="entry name" value="2-oxoglutarate dehydrogenase e1 mitochondrial"/>
    <property type="match status" value="1"/>
</dbReference>
<dbReference type="FunFam" id="3.40.50.970:FF:000002">
    <property type="entry name" value="2-oxoglutarate dehydrogenase, E1 component"/>
    <property type="match status" value="1"/>
</dbReference>
<dbReference type="FunFam" id="1.10.287.1150:FF:000001">
    <property type="entry name" value="2-oxoglutarate dehydrogenase, mitochondrial isoform X1"/>
    <property type="match status" value="1"/>
</dbReference>
<dbReference type="FunFam" id="3.40.50.11610:FF:000008">
    <property type="entry name" value="2-oxoglutarate dehydrogenase, mitochondrial isoform X4"/>
    <property type="match status" value="1"/>
</dbReference>
<dbReference type="Gene3D" id="3.40.50.12470">
    <property type="match status" value="1"/>
</dbReference>
<dbReference type="Gene3D" id="3.40.50.970">
    <property type="match status" value="1"/>
</dbReference>
<dbReference type="Gene3D" id="3.40.50.11610">
    <property type="entry name" value="Multifunctional 2-oxoglutarate metabolism enzyme, C-terminal domain"/>
    <property type="match status" value="1"/>
</dbReference>
<dbReference type="Gene3D" id="1.10.287.1150">
    <property type="entry name" value="TPP helical domain"/>
    <property type="match status" value="1"/>
</dbReference>
<dbReference type="InterPro" id="IPR032106">
    <property type="entry name" value="2-oxogl_dehyd_N"/>
</dbReference>
<dbReference type="InterPro" id="IPR011603">
    <property type="entry name" value="2oxoglutarate_DH_E1"/>
</dbReference>
<dbReference type="InterPro" id="IPR001017">
    <property type="entry name" value="DH_E1"/>
</dbReference>
<dbReference type="InterPro" id="IPR042179">
    <property type="entry name" value="KGD_C_sf"/>
</dbReference>
<dbReference type="InterPro" id="IPR031717">
    <property type="entry name" value="ODO-1/KGD_C"/>
</dbReference>
<dbReference type="InterPro" id="IPR029061">
    <property type="entry name" value="THDP-binding"/>
</dbReference>
<dbReference type="InterPro" id="IPR005475">
    <property type="entry name" value="Transketolase-like_Pyr-bd"/>
</dbReference>
<dbReference type="NCBIfam" id="TIGR00239">
    <property type="entry name" value="2oxo_dh_E1"/>
    <property type="match status" value="1"/>
</dbReference>
<dbReference type="NCBIfam" id="NF006914">
    <property type="entry name" value="PRK09404.1"/>
    <property type="match status" value="1"/>
</dbReference>
<dbReference type="NCBIfam" id="NF008907">
    <property type="entry name" value="PRK12270.1"/>
    <property type="match status" value="1"/>
</dbReference>
<dbReference type="PANTHER" id="PTHR23152">
    <property type="entry name" value="2-OXOGLUTARATE DEHYDROGENASE"/>
    <property type="match status" value="1"/>
</dbReference>
<dbReference type="PANTHER" id="PTHR23152:SF7">
    <property type="entry name" value="2-OXOGLUTARATE DEHYDROGENASE COMPLEX COMPONENT E1"/>
    <property type="match status" value="1"/>
</dbReference>
<dbReference type="Pfam" id="PF16078">
    <property type="entry name" value="2-oxogl_dehyd_N"/>
    <property type="match status" value="1"/>
</dbReference>
<dbReference type="Pfam" id="PF00676">
    <property type="entry name" value="E1_dh"/>
    <property type="match status" value="1"/>
</dbReference>
<dbReference type="Pfam" id="PF16870">
    <property type="entry name" value="OxoGdeHyase_C"/>
    <property type="match status" value="1"/>
</dbReference>
<dbReference type="Pfam" id="PF02779">
    <property type="entry name" value="Transket_pyr"/>
    <property type="match status" value="1"/>
</dbReference>
<dbReference type="PIRSF" id="PIRSF000157">
    <property type="entry name" value="Oxoglu_dh_E1"/>
    <property type="match status" value="1"/>
</dbReference>
<dbReference type="SMART" id="SM00861">
    <property type="entry name" value="Transket_pyr"/>
    <property type="match status" value="1"/>
</dbReference>
<dbReference type="SUPFAM" id="SSF52518">
    <property type="entry name" value="Thiamin diphosphate-binding fold (THDP-binding)"/>
    <property type="match status" value="2"/>
</dbReference>
<reference key="1">
    <citation type="journal article" date="1992" name="Proc. Natl. Acad. Sci. U.S.A.">
        <title>Cloning and nucleotide sequence of the cDNA encoding human 2-oxoglutarate dehydrogenase (lipoamide).</title>
        <authorList>
            <person name="Koike K."/>
            <person name="Urata Y."/>
            <person name="Goto S."/>
        </authorList>
    </citation>
    <scope>NUCLEOTIDE SEQUENCE [MRNA] (ISOFORM 1)</scope>
    <source>
        <tissue>Liver</tissue>
    </source>
</reference>
<reference key="2">
    <citation type="journal article" date="1995" name="Gene">
        <title>The gene encoding human 2-oxoglutarate dehydrogenase: structural organization and mapping to chromosome 7p13-p14.</title>
        <authorList>
            <person name="Koike K."/>
        </authorList>
    </citation>
    <scope>NUCLEOTIDE SEQUENCE [GENOMIC DNA]</scope>
    <scope>SEQUENCE REVISION</scope>
</reference>
<reference key="3">
    <citation type="journal article" date="2004" name="Nat. Genet.">
        <title>Complete sequencing and characterization of 21,243 full-length human cDNAs.</title>
        <authorList>
            <person name="Ota T."/>
            <person name="Suzuki Y."/>
            <person name="Nishikawa T."/>
            <person name="Otsuki T."/>
            <person name="Sugiyama T."/>
            <person name="Irie R."/>
            <person name="Wakamatsu A."/>
            <person name="Hayashi K."/>
            <person name="Sato H."/>
            <person name="Nagai K."/>
            <person name="Kimura K."/>
            <person name="Makita H."/>
            <person name="Sekine M."/>
            <person name="Obayashi M."/>
            <person name="Nishi T."/>
            <person name="Shibahara T."/>
            <person name="Tanaka T."/>
            <person name="Ishii S."/>
            <person name="Yamamoto J."/>
            <person name="Saito K."/>
            <person name="Kawai Y."/>
            <person name="Isono Y."/>
            <person name="Nakamura Y."/>
            <person name="Nagahari K."/>
            <person name="Murakami K."/>
            <person name="Yasuda T."/>
            <person name="Iwayanagi T."/>
            <person name="Wagatsuma M."/>
            <person name="Shiratori A."/>
            <person name="Sudo H."/>
            <person name="Hosoiri T."/>
            <person name="Kaku Y."/>
            <person name="Kodaira H."/>
            <person name="Kondo H."/>
            <person name="Sugawara M."/>
            <person name="Takahashi M."/>
            <person name="Kanda K."/>
            <person name="Yokoi T."/>
            <person name="Furuya T."/>
            <person name="Kikkawa E."/>
            <person name="Omura Y."/>
            <person name="Abe K."/>
            <person name="Kamihara K."/>
            <person name="Katsuta N."/>
            <person name="Sato K."/>
            <person name="Tanikawa M."/>
            <person name="Yamazaki M."/>
            <person name="Ninomiya K."/>
            <person name="Ishibashi T."/>
            <person name="Yamashita H."/>
            <person name="Murakawa K."/>
            <person name="Fujimori K."/>
            <person name="Tanai H."/>
            <person name="Kimata M."/>
            <person name="Watanabe M."/>
            <person name="Hiraoka S."/>
            <person name="Chiba Y."/>
            <person name="Ishida S."/>
            <person name="Ono Y."/>
            <person name="Takiguchi S."/>
            <person name="Watanabe S."/>
            <person name="Yosida M."/>
            <person name="Hotuta T."/>
            <person name="Kusano J."/>
            <person name="Kanehori K."/>
            <person name="Takahashi-Fujii A."/>
            <person name="Hara H."/>
            <person name="Tanase T.-O."/>
            <person name="Nomura Y."/>
            <person name="Togiya S."/>
            <person name="Komai F."/>
            <person name="Hara R."/>
            <person name="Takeuchi K."/>
            <person name="Arita M."/>
            <person name="Imose N."/>
            <person name="Musashino K."/>
            <person name="Yuuki H."/>
            <person name="Oshima A."/>
            <person name="Sasaki N."/>
            <person name="Aotsuka S."/>
            <person name="Yoshikawa Y."/>
            <person name="Matsunawa H."/>
            <person name="Ichihara T."/>
            <person name="Shiohata N."/>
            <person name="Sano S."/>
            <person name="Moriya S."/>
            <person name="Momiyama H."/>
            <person name="Satoh N."/>
            <person name="Takami S."/>
            <person name="Terashima Y."/>
            <person name="Suzuki O."/>
            <person name="Nakagawa S."/>
            <person name="Senoh A."/>
            <person name="Mizoguchi H."/>
            <person name="Goto Y."/>
            <person name="Shimizu F."/>
            <person name="Wakebe H."/>
            <person name="Hishigaki H."/>
            <person name="Watanabe T."/>
            <person name="Sugiyama A."/>
            <person name="Takemoto M."/>
            <person name="Kawakami B."/>
            <person name="Yamazaki M."/>
            <person name="Watanabe K."/>
            <person name="Kumagai A."/>
            <person name="Itakura S."/>
            <person name="Fukuzumi Y."/>
            <person name="Fujimori Y."/>
            <person name="Komiyama M."/>
            <person name="Tashiro H."/>
            <person name="Tanigami A."/>
            <person name="Fujiwara T."/>
            <person name="Ono T."/>
            <person name="Yamada K."/>
            <person name="Fujii Y."/>
            <person name="Ozaki K."/>
            <person name="Hirao M."/>
            <person name="Ohmori Y."/>
            <person name="Kawabata A."/>
            <person name="Hikiji T."/>
            <person name="Kobatake N."/>
            <person name="Inagaki H."/>
            <person name="Ikema Y."/>
            <person name="Okamoto S."/>
            <person name="Okitani R."/>
            <person name="Kawakami T."/>
            <person name="Noguchi S."/>
            <person name="Itoh T."/>
            <person name="Shigeta K."/>
            <person name="Senba T."/>
            <person name="Matsumura K."/>
            <person name="Nakajima Y."/>
            <person name="Mizuno T."/>
            <person name="Morinaga M."/>
            <person name="Sasaki M."/>
            <person name="Togashi T."/>
            <person name="Oyama M."/>
            <person name="Hata H."/>
            <person name="Watanabe M."/>
            <person name="Komatsu T."/>
            <person name="Mizushima-Sugano J."/>
            <person name="Satoh T."/>
            <person name="Shirai Y."/>
            <person name="Takahashi Y."/>
            <person name="Nakagawa K."/>
            <person name="Okumura K."/>
            <person name="Nagase T."/>
            <person name="Nomura N."/>
            <person name="Kikuchi H."/>
            <person name="Masuho Y."/>
            <person name="Yamashita R."/>
            <person name="Nakai K."/>
            <person name="Yada T."/>
            <person name="Nakamura Y."/>
            <person name="Ohara O."/>
            <person name="Isogai T."/>
            <person name="Sugano S."/>
        </authorList>
    </citation>
    <scope>NUCLEOTIDE SEQUENCE [LARGE SCALE MRNA] (ISOFORM 2)</scope>
    <source>
        <tissue>Trachea</tissue>
    </source>
</reference>
<reference key="4">
    <citation type="journal article" date="2003" name="Nature">
        <title>The DNA sequence of human chromosome 7.</title>
        <authorList>
            <person name="Hillier L.W."/>
            <person name="Fulton R.S."/>
            <person name="Fulton L.A."/>
            <person name="Graves T.A."/>
            <person name="Pepin K.H."/>
            <person name="Wagner-McPherson C."/>
            <person name="Layman D."/>
            <person name="Maas J."/>
            <person name="Jaeger S."/>
            <person name="Walker R."/>
            <person name="Wylie K."/>
            <person name="Sekhon M."/>
            <person name="Becker M.C."/>
            <person name="O'Laughlin M.D."/>
            <person name="Schaller M.E."/>
            <person name="Fewell G.A."/>
            <person name="Delehaunty K.D."/>
            <person name="Miner T.L."/>
            <person name="Nash W.E."/>
            <person name="Cordes M."/>
            <person name="Du H."/>
            <person name="Sun H."/>
            <person name="Edwards J."/>
            <person name="Bradshaw-Cordum H."/>
            <person name="Ali J."/>
            <person name="Andrews S."/>
            <person name="Isak A."/>
            <person name="Vanbrunt A."/>
            <person name="Nguyen C."/>
            <person name="Du F."/>
            <person name="Lamar B."/>
            <person name="Courtney L."/>
            <person name="Kalicki J."/>
            <person name="Ozersky P."/>
            <person name="Bielicki L."/>
            <person name="Scott K."/>
            <person name="Holmes A."/>
            <person name="Harkins R."/>
            <person name="Harris A."/>
            <person name="Strong C.M."/>
            <person name="Hou S."/>
            <person name="Tomlinson C."/>
            <person name="Dauphin-Kohlberg S."/>
            <person name="Kozlowicz-Reilly A."/>
            <person name="Leonard S."/>
            <person name="Rohlfing T."/>
            <person name="Rock S.M."/>
            <person name="Tin-Wollam A.-M."/>
            <person name="Abbott A."/>
            <person name="Minx P."/>
            <person name="Maupin R."/>
            <person name="Strowmatt C."/>
            <person name="Latreille P."/>
            <person name="Miller N."/>
            <person name="Johnson D."/>
            <person name="Murray J."/>
            <person name="Woessner J.P."/>
            <person name="Wendl M.C."/>
            <person name="Yang S.-P."/>
            <person name="Schultz B.R."/>
            <person name="Wallis J.W."/>
            <person name="Spieth J."/>
            <person name="Bieri T.A."/>
            <person name="Nelson J.O."/>
            <person name="Berkowicz N."/>
            <person name="Wohldmann P.E."/>
            <person name="Cook L.L."/>
            <person name="Hickenbotham M.T."/>
            <person name="Eldred J."/>
            <person name="Williams D."/>
            <person name="Bedell J.A."/>
            <person name="Mardis E.R."/>
            <person name="Clifton S.W."/>
            <person name="Chissoe S.L."/>
            <person name="Marra M.A."/>
            <person name="Raymond C."/>
            <person name="Haugen E."/>
            <person name="Gillett W."/>
            <person name="Zhou Y."/>
            <person name="James R."/>
            <person name="Phelps K."/>
            <person name="Iadanoto S."/>
            <person name="Bubb K."/>
            <person name="Simms E."/>
            <person name="Levy R."/>
            <person name="Clendenning J."/>
            <person name="Kaul R."/>
            <person name="Kent W.J."/>
            <person name="Furey T.S."/>
            <person name="Baertsch R.A."/>
            <person name="Brent M.R."/>
            <person name="Keibler E."/>
            <person name="Flicek P."/>
            <person name="Bork P."/>
            <person name="Suyama M."/>
            <person name="Bailey J.A."/>
            <person name="Portnoy M.E."/>
            <person name="Torrents D."/>
            <person name="Chinwalla A.T."/>
            <person name="Gish W.R."/>
            <person name="Eddy S.R."/>
            <person name="McPherson J.D."/>
            <person name="Olson M.V."/>
            <person name="Eichler E.E."/>
            <person name="Green E.D."/>
            <person name="Waterston R.H."/>
            <person name="Wilson R.K."/>
        </authorList>
    </citation>
    <scope>NUCLEOTIDE SEQUENCE [LARGE SCALE GENOMIC DNA]</scope>
</reference>
<reference key="5">
    <citation type="submission" date="2005-09" db="EMBL/GenBank/DDBJ databases">
        <authorList>
            <person name="Mural R.J."/>
            <person name="Istrail S."/>
            <person name="Sutton G.G."/>
            <person name="Florea L."/>
            <person name="Halpern A.L."/>
            <person name="Mobarry C.M."/>
            <person name="Lippert R."/>
            <person name="Walenz B."/>
            <person name="Shatkay H."/>
            <person name="Dew I."/>
            <person name="Miller J.R."/>
            <person name="Flanigan M.J."/>
            <person name="Edwards N.J."/>
            <person name="Bolanos R."/>
            <person name="Fasulo D."/>
            <person name="Halldorsson B.V."/>
            <person name="Hannenhalli S."/>
            <person name="Turner R."/>
            <person name="Yooseph S."/>
            <person name="Lu F."/>
            <person name="Nusskern D.R."/>
            <person name="Shue B.C."/>
            <person name="Zheng X.H."/>
            <person name="Zhong F."/>
            <person name="Delcher A.L."/>
            <person name="Huson D.H."/>
            <person name="Kravitz S.A."/>
            <person name="Mouchard L."/>
            <person name="Reinert K."/>
            <person name="Remington K.A."/>
            <person name="Clark A.G."/>
            <person name="Waterman M.S."/>
            <person name="Eichler E.E."/>
            <person name="Adams M.D."/>
            <person name="Hunkapiller M.W."/>
            <person name="Myers E.W."/>
            <person name="Venter J.C."/>
        </authorList>
    </citation>
    <scope>NUCLEOTIDE SEQUENCE [LARGE SCALE GENOMIC DNA]</scope>
</reference>
<reference key="6">
    <citation type="journal article" date="2004" name="Genome Res.">
        <title>The status, quality, and expansion of the NIH full-length cDNA project: the Mammalian Gene Collection (MGC).</title>
        <authorList>
            <consortium name="The MGC Project Team"/>
        </authorList>
    </citation>
    <scope>NUCLEOTIDE SEQUENCE [LARGE SCALE MRNA] (ISOFORMS 1 AND 3)</scope>
    <source>
        <tissue>Bone marrow</tissue>
        <tissue>Muscle</tissue>
    </source>
</reference>
<reference key="7">
    <citation type="journal article" date="2007" name="Proteomics">
        <title>Tryptic digestion of ubiquitin standards reveals an improved strategy for identifying ubiquitinated proteins by mass spectrometry.</title>
        <authorList>
            <person name="Denis N.J."/>
            <person name="Vasilescu J."/>
            <person name="Lambert J.-P."/>
            <person name="Smith J.C."/>
            <person name="Figeys D."/>
        </authorList>
    </citation>
    <scope>UBIQUITINATION [LARGE SCALE ANALYSIS] AT LYS-534</scope>
    <scope>IDENTIFICATION BY MASS SPECTROMETRY</scope>
    <source>
        <tissue>Mammary cancer</tissue>
    </source>
</reference>
<reference key="8">
    <citation type="journal article" date="2009" name="Science">
        <title>Lysine acetylation targets protein complexes and co-regulates major cellular functions.</title>
        <authorList>
            <person name="Choudhary C."/>
            <person name="Kumar C."/>
            <person name="Gnad F."/>
            <person name="Nielsen M.L."/>
            <person name="Rehman M."/>
            <person name="Walther T.C."/>
            <person name="Olsen J.V."/>
            <person name="Mann M."/>
        </authorList>
    </citation>
    <scope>ACETYLATION [LARGE SCALE ANALYSIS] AT LYS-970</scope>
    <scope>IDENTIFICATION BY MASS SPECTROMETRY [LARGE SCALE ANALYSIS]</scope>
</reference>
<reference key="9">
    <citation type="journal article" date="2011" name="BMC Syst. Biol.">
        <title>Initial characterization of the human central proteome.</title>
        <authorList>
            <person name="Burkard T.R."/>
            <person name="Planyavsky M."/>
            <person name="Kaupe I."/>
            <person name="Breitwieser F.P."/>
            <person name="Buerckstuemmer T."/>
            <person name="Bennett K.L."/>
            <person name="Superti-Furga G."/>
            <person name="Colinge J."/>
        </authorList>
    </citation>
    <scope>IDENTIFICATION BY MASS SPECTROMETRY [LARGE SCALE ANALYSIS]</scope>
</reference>
<reference key="10">
    <citation type="journal article" date="2014" name="Biochem. J.">
        <title>Studies on the regulation of the human E1 subunit of the 2-oxoglutarate dehydrogenase complex, including the identification of a novel calcium-binding site.</title>
        <authorList>
            <person name="Armstrong C.T."/>
            <person name="Anderson J.L."/>
            <person name="Denton R.M."/>
        </authorList>
    </citation>
    <scope>FUNCTION</scope>
    <scope>CATALYTIC ACTIVITY</scope>
    <scope>ACTIVITY REGULATION</scope>
    <scope>COFACTOR</scope>
    <scope>MUTAGENESIS OF ASP-154</scope>
</reference>
<reference key="11">
    <citation type="journal article" date="2014" name="J. Biol. Chem.">
        <title>Human 2-oxoglutarate dehydrogenase complex E1 component forms a thiamin-derived radical by aerobic oxidation of the enamine intermediate.</title>
        <authorList>
            <person name="Nemeria N.S."/>
            <person name="Ambrus A."/>
            <person name="Patel H."/>
            <person name="Gerfen G."/>
            <person name="Adam-Vizi V."/>
            <person name="Tretter L."/>
            <person name="Zhou J."/>
            <person name="Wang J."/>
            <person name="Jordan F."/>
        </authorList>
    </citation>
    <scope>FUNCTION</scope>
    <scope>CATALYTIC ACTIVITY</scope>
</reference>
<reference key="12">
    <citation type="journal article" date="2017" name="Free Radic. Biol. Med.">
        <title>The human Krebs cycle 2-oxoglutarate dehydrogenase complex creates an additional source of superoxide/hydrogen peroxide from 2-oxoadipate as alternative substrate.</title>
        <authorList>
            <person name="Nemeria N.S."/>
            <person name="Gerfen G."/>
            <person name="Guevara E."/>
            <person name="Nareddy P.R."/>
            <person name="Szostak M."/>
            <person name="Jordan F."/>
        </authorList>
    </citation>
    <scope>FUNCTION</scope>
    <scope>CATALYTIC ACTIVITY</scope>
</reference>
<reference key="13">
    <citation type="journal article" date="2014" name="J. Proteomics">
        <title>An enzyme assisted RP-RPLC approach for in-depth analysis of human liver phosphoproteome.</title>
        <authorList>
            <person name="Bian Y."/>
            <person name="Song C."/>
            <person name="Cheng K."/>
            <person name="Dong M."/>
            <person name="Wang F."/>
            <person name="Huang J."/>
            <person name="Sun D."/>
            <person name="Wang L."/>
            <person name="Ye M."/>
            <person name="Zou H."/>
        </authorList>
    </citation>
    <scope>IDENTIFICATION BY MASS SPECTROMETRY [LARGE SCALE ANALYSIS]</scope>
    <source>
        <tissue>Liver</tissue>
    </source>
</reference>
<reference key="14">
    <citation type="journal article" date="2015" name="Proteomics">
        <title>N-terminome analysis of the human mitochondrial proteome.</title>
        <authorList>
            <person name="Vaca Jacome A.S."/>
            <person name="Rabilloud T."/>
            <person name="Schaeffer-Reiss C."/>
            <person name="Rompais M."/>
            <person name="Ayoub D."/>
            <person name="Lane L."/>
            <person name="Bairoch A."/>
            <person name="Van Dorsselaer A."/>
            <person name="Carapito C."/>
        </authorList>
    </citation>
    <scope>IDENTIFICATION BY MASS SPECTROMETRY [LARGE SCALE ANALYSIS]</scope>
</reference>
<reference key="15">
    <citation type="journal article" date="2017" name="Nature">
        <title>KAT2A coupled with the alpha-KGDH complex acts as a histone H3 succinyltransferase.</title>
        <authorList>
            <person name="Wang Y."/>
            <person name="Guo Y.R."/>
            <person name="Liu K."/>
            <person name="Yin Z."/>
            <person name="Liu R."/>
            <person name="Xia Y."/>
            <person name="Tan L."/>
            <person name="Yang P."/>
            <person name="Lee J.H."/>
            <person name="Li X.J."/>
            <person name="Hawke D."/>
            <person name="Zheng Y."/>
            <person name="Qian X."/>
            <person name="Lyu J."/>
            <person name="He J."/>
            <person name="Xing D."/>
            <person name="Tao Y.J."/>
            <person name="Lu Z."/>
        </authorList>
    </citation>
    <scope>FUNCTION</scope>
    <scope>CATALYTIC ACTIVITY</scope>
    <scope>SUBCELLULAR LOCATION</scope>
    <scope>SUBUNIT</scope>
    <scope>MUTAGENESIS OF 459-PRO-TYR-460</scope>
</reference>
<reference key="16">
    <citation type="journal article" date="2020" name="Nat. Commun.">
        <title>ABHD11 maintains 2-oxoglutarate metabolism by preserving functional lipoylation of the 2-oxoglutarate dehydrogenase complex.</title>
        <authorList>
            <person name="Bailey P.S.J."/>
            <person name="Ortmann B.M."/>
            <person name="Martinelli A.W."/>
            <person name="Houghton J.W."/>
            <person name="Costa A.S.H."/>
            <person name="Burr S.P."/>
            <person name="Antrobus R."/>
            <person name="Frezza C."/>
            <person name="Nathan J.A."/>
        </authorList>
    </citation>
    <scope>INTERACTION WITH ABHD11</scope>
</reference>
<reference key="17">
    <citation type="journal article" date="2008" name="Biochemistry">
        <title>Different thermodynamic binding mechanisms and peptide fine specificities associated with a panel of structurally similar high-affinity T cell receptors.</title>
        <authorList>
            <person name="Jones L.L."/>
            <person name="Colf L.A."/>
            <person name="Bankovich A.J."/>
            <person name="Stone J.D."/>
            <person name="Gao Y.G."/>
            <person name="Chan C.M."/>
            <person name="Huang R.H."/>
            <person name="Garcia K.C."/>
            <person name="Kranz D.M."/>
        </authorList>
    </citation>
    <scope>X-RAY CRYSTALLOGRAPHY (1.95 ANGSTROMS) OF 932-940 IN COMPLEX WITH H-2 CLASS I HISTOCOMPATIBILITY COMPLEX</scope>
</reference>
<reference evidence="23" key="18">
    <citation type="journal article" date="2022" name="Biochem. Biophys. Res. Commun.">
        <title>Structural basis for the activity and regulation of human alpha-ketoglutarate dehydrogenase revealed by Cryo-EM.</title>
        <authorList>
            <person name="Zhong Y."/>
            <person name="Gao Y."/>
            <person name="Zhou D."/>
            <person name="Ma X."/>
            <person name="Chen H."/>
            <person name="Xu Y."/>
            <person name="Yang W."/>
            <person name="Yu X."/>
        </authorList>
    </citation>
    <scope>STRUCTURE BY ELECTRON MICROSCOPY (2.92 ANGSTROMS) OF 129-1023 IN COMPLEX WITH CA(2+); MG(2+) AND THIAMINE DIPHOSPHATE</scope>
    <scope>FUNCTION</scope>
    <scope>CATALYTIC ACTIVITY</scope>
    <scope>BIOPHYSICOCHEMICAL PROPERTIES</scope>
    <scope>SUBUNIT</scope>
</reference>
<organism>
    <name type="scientific">Homo sapiens</name>
    <name type="common">Human</name>
    <dbReference type="NCBI Taxonomy" id="9606"/>
    <lineage>
        <taxon>Eukaryota</taxon>
        <taxon>Metazoa</taxon>
        <taxon>Chordata</taxon>
        <taxon>Craniata</taxon>
        <taxon>Vertebrata</taxon>
        <taxon>Euteleostomi</taxon>
        <taxon>Mammalia</taxon>
        <taxon>Eutheria</taxon>
        <taxon>Euarchontoglires</taxon>
        <taxon>Primates</taxon>
        <taxon>Haplorrhini</taxon>
        <taxon>Catarrhini</taxon>
        <taxon>Hominidae</taxon>
        <taxon>Homo</taxon>
    </lineage>
</organism>
<gene>
    <name evidence="22" type="primary">OGDH</name>
</gene>
<comment type="function">
    <text evidence="6 7 8 9 14">2-oxoglutarate dehydrogenase (E1o) component of the 2-oxoglutarate dehydrogenase complex (OGDHC) (PubMed:24495017, PubMed:25210035, PubMed:28435050). Participates in the first step, rate limiting for the overall conversion of 2-oxoglutarate to succinyl-CoA and CO(2) catalyzed by the whole OGDHC (PubMed:24495017, PubMed:25210035, PubMed:28435050). Catalyzes the irreversible decarboxylation of 2-oxoglutarate (alpha-ketoglutarate) via the thiamine diphosphate (ThDP) cofactor and subsequent transfer of the decarboxylated acyl intermediate on an oxidized dihydrolipoyl group that is covalently amidated to the E2 enzyme (dihydrolipoyllysine-residue succinyltransferase or DLST) (PubMed:24495017, PubMed:25210035, PubMed:28435050, PubMed:35272141). Plays a key role in the Krebs (citric acid) cycle, which is a common pathway for oxidation of fuel molecules, including carbohydrates, fatty acids, and amino acids (PubMed:25210035). Can catalyze the decarboxylation of 2-oxoadipate in vitro, but at a much lower rate than 2-oxoglutarate (PubMed:28435050). Mainly active in the mitochondrion (PubMed:29211711). A fraction of the 2-oxoglutarate dehydrogenase complex also localizes in the nucleus and is required for lysine succinylation of histones: associates with KAT2A on chromatin and provides succinyl-CoA to histone succinyltransferase KAT2A (PubMed:29211711).</text>
</comment>
<comment type="catalytic activity">
    <reaction evidence="6 7 8 9 11">
        <text>N(6)-[(R)-lipoyl]-L-lysyl-[protein] + 2-oxoglutarate + H(+) = N(6)-[(R)-S(8)-succinyldihydrolipoyl]-L-lysyl-[protein] + CO2</text>
        <dbReference type="Rhea" id="RHEA:12188"/>
        <dbReference type="Rhea" id="RHEA-COMP:10474"/>
        <dbReference type="Rhea" id="RHEA-COMP:20092"/>
        <dbReference type="ChEBI" id="CHEBI:15378"/>
        <dbReference type="ChEBI" id="CHEBI:16526"/>
        <dbReference type="ChEBI" id="CHEBI:16810"/>
        <dbReference type="ChEBI" id="CHEBI:83099"/>
        <dbReference type="ChEBI" id="CHEBI:83120"/>
        <dbReference type="EC" id="1.2.4.2"/>
    </reaction>
    <physiologicalReaction direction="left-to-right" evidence="17 18 19 20 21">
        <dbReference type="Rhea" id="RHEA:12189"/>
    </physiologicalReaction>
</comment>
<comment type="cofactor">
    <cofactor evidence="6">
        <name>thiamine diphosphate</name>
        <dbReference type="ChEBI" id="CHEBI:58937"/>
    </cofactor>
    <cofactor evidence="11">
        <name>Mg(2+)</name>
        <dbReference type="ChEBI" id="CHEBI:18420"/>
    </cofactor>
</comment>
<comment type="activity regulation">
    <text evidence="6">Calcium ions and ADP stimulate, whereas ATP and NADH reduce catalytic activity.</text>
</comment>
<comment type="biophysicochemical properties">
    <temperatureDependence>
        <text evidence="11">Optimum temperature is 37 degrees Celsius. Activity decreases with increasing temperature.</text>
    </temperatureDependence>
</comment>
<comment type="subunit">
    <text evidence="1 9 10 11">Homodimer (PubMed:35272141). The 2-oxoglutarate dehydrogenase complex is composed of OGDH (2-oxoglutarate dehydrogenase; E1), DLST (dihydrolipoamide succinyltransferase; E2), DLD (dihydrolipoamide dehydrogenase; E3), and the assembly factor KGD4 (By similarity). It contains multiple copies of the three enzymatic components (E1, E2 and E3). In the nucleus, the 2-oxoglutarate dehydrogenase complex associates with KAT2A (PubMed:29211711). Interacts with ABHD11; this interaction maintains the functional lipoylation of the 2-oxoglutarate dehydrogenase complex (PubMed:32792488).</text>
</comment>
<comment type="interaction">
    <interactant intactId="EBI-747213">
        <id>Q02218</id>
    </interactant>
    <interactant intactId="EBI-930964">
        <id>P54253</id>
        <label>ATXN1</label>
    </interactant>
    <organismsDiffer>false</organismsDiffer>
    <experiments>3</experiments>
</comment>
<comment type="interaction">
    <interactant intactId="EBI-747213">
        <id>Q02218</id>
    </interactant>
    <interactant intactId="EBI-466029">
        <id>P42858</id>
        <label>HTT</label>
    </interactant>
    <organismsDiffer>false</organismsDiffer>
    <experiments>3</experiments>
</comment>
<comment type="subcellular location">
    <subcellularLocation>
        <location evidence="9">Mitochondrion</location>
    </subcellularLocation>
    <subcellularLocation>
        <location evidence="9">Nucleus</location>
    </subcellularLocation>
    <text evidence="9">Mainly localizes in the mitochondrion. A small fraction localizes to the nucleus, where the 2-oxoglutarate dehydrogenase complex is required for histone succinylation.</text>
</comment>
<comment type="alternative products">
    <event type="alternative splicing"/>
    <isoform>
        <id>Q02218-1</id>
        <name>1</name>
        <sequence type="displayed"/>
    </isoform>
    <isoform>
        <id>Q02218-2</id>
        <name>2</name>
        <sequence type="described" ref="VSP_042313"/>
    </isoform>
    <isoform>
        <id>Q02218-3</id>
        <name>3</name>
        <sequence type="described" ref="VSP_043628 VSP_043629"/>
    </isoform>
</comment>
<comment type="miscellaneous">
    <molecule>Isoform 2</molecule>
    <text evidence="16">Probably insensitive to calcium.</text>
</comment>
<comment type="miscellaneous">
    <text evidence="3">The mitochondrial 2-oxoglutarate and 2-oxoadipate dehydrogenase complexes (OGDHC and OADHC, respectively) share their E2 (DLST) and E3 (dihydrolipoyl dehydrogenase or DLD) components, but the E1 component is specific to each complex (E1o and E1a (DHTK1), respectively).</text>
</comment>
<comment type="similarity">
    <text evidence="16">Belongs to the alpha-ketoglutarate dehydrogenase family.</text>
</comment>
<comment type="sequence caution" evidence="16">
    <conflict type="frameshift">
        <sequence resource="EMBL-CDS" id="BAA01393"/>
    </conflict>
</comment>
<comment type="sequence caution" evidence="16">
    <conflict type="frameshift">
        <sequence resource="EMBL-CDS" id="BAA06836"/>
    </conflict>
</comment>
<comment type="online information" name="Wikipedia">
    <link uri="https://en.wikipedia.org/wiki/Alpha-ketoglutarate_dehydrogenase"/>
    <text>Alpha-ketoglutarate dehydrogenase entry</text>
</comment>
<sequence>MFHLRTCAAKLRPLTASQTVKTFSQNRPAAARTFQQIRCYSAPVAAEPFLSGTSSNYVEEMYCAWLENPKSVHKSWDIFFRNTNAGAPPGTAYQSPLPLSRGSLAAVAHAQSLVEAQPNVDKLVEDHLAVQSLIRAYQIRGHHVAQLDPLGILDADLDSSVPADIISSTDKLGFYGLDESDLDKVFHLPTTTFIGGQESALPLREIIRRLEMAYCQHIGVEFMFINDLEQCQWIRQKFETPGIMQFTNEEKRTLLARLVRSTRFEEFLQRKWSSEKRFGLEGCEVLIPALKTIIDKSSENGVDYVIMGMPHRGRLNVLANVIRKELEQIFCQFDSKLEAADEGSGDVKYHLGMYHRRINRVTDRNITLSLVANPSHLEAADPVVMGKTKAEQFYCGDTEGKKVMSILLHGDAAFAGQGIVYETFHLSDLPSYTTHGTVHVVVNNQIGFTTDPRMARSSPYPTDVARVVNAPIFHVNSDDPEAVMYVCKVAAEWRSTFHKDVVVDLVCYRRNGHNEMDEPMFTQPLMYKQIRKQKPVLQKYAELLVSQGVVNQPEYEEEISKYDKICEEAFARSKDEKILHIKHWLDSPWPGFFTLDGQPRSMSCPSTGLTEDILTHIGNVASSVPVENFTIHGGLSRILKTRGEMVKNRTVDWALAEYMAFGSLLKEGIHIRLSGQDVERGTFSHRHHVLHDQNVDKRTCIPMNHLWPNQAPYTVCNSSLSEYGVLGFELGFAMASPNALVLWEAQFGDFHNTAQCIIDQFICPGQAKWVRQNGIVLLLPHGMEGMGPEHSSARPERFLQMCNDDPDVLPDLKEANFDINQLYDCNWVVVNCSTPGNFFHVLRRQILLPFRKPLIIFTPKSLLRHPEARSSFDEMLPGTHFQRVIPEDGPAAQNPENVKRLLFCTGKVYYDLTRERKARDMVGQVAITRIEQLSPFPFDLLLKEVQKYPNAELAWCQEEHKNQGYYDYVKPRLRTTISRAKPVWYAGRDPAAAPATGNKKTHLTELQRLLDTAFDLDVFKNFS</sequence>
<accession>Q02218</accession>
<accession>B4E2U9</accession>
<accession>D3DVL0</accession>
<accession>E9PBM1</accession>
<accession>Q96DD3</accession>
<accession>Q9UDX0</accession>